<accession>P20578</accession>
<keyword id="KW-0028">Amino-acid biosynthesis</keyword>
<keyword id="KW-0057">Aromatic amino acid biosynthesis</keyword>
<keyword id="KW-0210">Decarboxylase</keyword>
<keyword id="KW-0456">Lyase</keyword>
<keyword id="KW-0822">Tryptophan biosynthesis</keyword>
<protein>
    <recommendedName>
        <fullName>Indole-3-glycerol phosphate synthase</fullName>
        <shortName>IGPS</shortName>
        <ecNumber>4.1.1.48</ecNumber>
    </recommendedName>
</protein>
<gene>
    <name type="primary">trpC</name>
</gene>
<organism>
    <name type="scientific">Pseudomonas putida</name>
    <name type="common">Arthrobacter siderocapsulatus</name>
    <dbReference type="NCBI Taxonomy" id="303"/>
    <lineage>
        <taxon>Bacteria</taxon>
        <taxon>Pseudomonadati</taxon>
        <taxon>Pseudomonadota</taxon>
        <taxon>Gammaproteobacteria</taxon>
        <taxon>Pseudomonadales</taxon>
        <taxon>Pseudomonadaceae</taxon>
        <taxon>Pseudomonas</taxon>
    </lineage>
</organism>
<sequence>MSVPTVLERIIARKFQEVAERSARVSLAELERLAKTADAPRGFANALIEQAKRKQPAVIAEIKKASPSKGVIREHFVPAEIAVSYEKGGATCLSVLTDVDYFQGADEYLQQARAAVSLPVIRKDFMVDPYQIVEARALGADCVLLIVSALDDVKMAELAATAKDVGLDVLVEVHDGDELERALKTLDTPLVGVNNRNLHTFEVSLETTLDLLPRIPRDRLAITESGILNRADVELMAINEVYSFLVGEAFMRAEQPGLELQRLFFPEQVKKTVQPLD</sequence>
<reference key="1">
    <citation type="journal article" date="1990" name="J. Bacteriol.">
        <title>Evolutionary differences in chromosomal locations of four early genes of the tryptophan pathway in fluorescent pseudomonads: DNA sequences and characterization of Pseudomonas putida trpE and trpGDC.</title>
        <authorList>
            <person name="Essar D.W."/>
            <person name="Eberly L."/>
            <person name="Crawford I.P."/>
        </authorList>
    </citation>
    <scope>NUCLEOTIDE SEQUENCE [GENOMIC DNA]</scope>
    <source>
        <strain>ATCC 23287 / C1S</strain>
    </source>
</reference>
<evidence type="ECO:0000305" key="1"/>
<dbReference type="EC" id="4.1.1.48"/>
<dbReference type="EMBL" id="M33799">
    <property type="protein sequence ID" value="AAA80555.1"/>
    <property type="molecule type" value="Genomic_DNA"/>
</dbReference>
<dbReference type="PIR" id="D35115">
    <property type="entry name" value="D35115"/>
</dbReference>
<dbReference type="RefSeq" id="WP_016715789.1">
    <property type="nucleotide sequence ID" value="NZ_AP022324.1"/>
</dbReference>
<dbReference type="SMR" id="P20578"/>
<dbReference type="GeneID" id="49866566"/>
<dbReference type="OrthoDB" id="9804217at2"/>
<dbReference type="UniPathway" id="UPA00035">
    <property type="reaction ID" value="UER00043"/>
</dbReference>
<dbReference type="GO" id="GO:0004425">
    <property type="term" value="F:indole-3-glycerol-phosphate synthase activity"/>
    <property type="evidence" value="ECO:0007669"/>
    <property type="project" value="UniProtKB-UniRule"/>
</dbReference>
<dbReference type="GO" id="GO:0004640">
    <property type="term" value="F:phosphoribosylanthranilate isomerase activity"/>
    <property type="evidence" value="ECO:0007669"/>
    <property type="project" value="TreeGrafter"/>
</dbReference>
<dbReference type="GO" id="GO:0000162">
    <property type="term" value="P:L-tryptophan biosynthetic process"/>
    <property type="evidence" value="ECO:0007669"/>
    <property type="project" value="UniProtKB-UniRule"/>
</dbReference>
<dbReference type="CDD" id="cd00331">
    <property type="entry name" value="IGPS"/>
    <property type="match status" value="1"/>
</dbReference>
<dbReference type="FunFam" id="3.20.20.70:FF:000024">
    <property type="entry name" value="Indole-3-glycerol phosphate synthase"/>
    <property type="match status" value="1"/>
</dbReference>
<dbReference type="Gene3D" id="3.20.20.70">
    <property type="entry name" value="Aldolase class I"/>
    <property type="match status" value="1"/>
</dbReference>
<dbReference type="HAMAP" id="MF_00134_B">
    <property type="entry name" value="IGPS_B"/>
    <property type="match status" value="1"/>
</dbReference>
<dbReference type="InterPro" id="IPR013785">
    <property type="entry name" value="Aldolase_TIM"/>
</dbReference>
<dbReference type="InterPro" id="IPR045186">
    <property type="entry name" value="Indole-3-glycerol_P_synth"/>
</dbReference>
<dbReference type="InterPro" id="IPR013798">
    <property type="entry name" value="Indole-3-glycerol_P_synth_dom"/>
</dbReference>
<dbReference type="InterPro" id="IPR001468">
    <property type="entry name" value="Indole-3-GlycerolPSynthase_CS"/>
</dbReference>
<dbReference type="InterPro" id="IPR011060">
    <property type="entry name" value="RibuloseP-bd_barrel"/>
</dbReference>
<dbReference type="NCBIfam" id="NF001370">
    <property type="entry name" value="PRK00278.1-2"/>
    <property type="match status" value="1"/>
</dbReference>
<dbReference type="NCBIfam" id="NF001373">
    <property type="entry name" value="PRK00278.1-6"/>
    <property type="match status" value="1"/>
</dbReference>
<dbReference type="NCBIfam" id="NF001377">
    <property type="entry name" value="PRK00278.2-4"/>
    <property type="match status" value="1"/>
</dbReference>
<dbReference type="PANTHER" id="PTHR22854:SF2">
    <property type="entry name" value="INDOLE-3-GLYCEROL-PHOSPHATE SYNTHASE"/>
    <property type="match status" value="1"/>
</dbReference>
<dbReference type="PANTHER" id="PTHR22854">
    <property type="entry name" value="TRYPTOPHAN BIOSYNTHESIS PROTEIN"/>
    <property type="match status" value="1"/>
</dbReference>
<dbReference type="Pfam" id="PF00218">
    <property type="entry name" value="IGPS"/>
    <property type="match status" value="1"/>
</dbReference>
<dbReference type="SUPFAM" id="SSF51366">
    <property type="entry name" value="Ribulose-phoshate binding barrel"/>
    <property type="match status" value="1"/>
</dbReference>
<dbReference type="PROSITE" id="PS00614">
    <property type="entry name" value="IGPS"/>
    <property type="match status" value="1"/>
</dbReference>
<proteinExistence type="inferred from homology"/>
<comment type="catalytic activity">
    <reaction>
        <text>1-(2-carboxyphenylamino)-1-deoxy-D-ribulose 5-phosphate + H(+) = (1S,2R)-1-C-(indol-3-yl)glycerol 3-phosphate + CO2 + H2O</text>
        <dbReference type="Rhea" id="RHEA:23476"/>
        <dbReference type="ChEBI" id="CHEBI:15377"/>
        <dbReference type="ChEBI" id="CHEBI:15378"/>
        <dbReference type="ChEBI" id="CHEBI:16526"/>
        <dbReference type="ChEBI" id="CHEBI:58613"/>
        <dbReference type="ChEBI" id="CHEBI:58866"/>
        <dbReference type="EC" id="4.1.1.48"/>
    </reaction>
</comment>
<comment type="pathway">
    <text>Amino-acid biosynthesis; L-tryptophan biosynthesis; L-tryptophan from chorismate: step 4/5.</text>
</comment>
<comment type="similarity">
    <text evidence="1">Belongs to the TrpC family.</text>
</comment>
<name>TRPC_PSEPU</name>
<feature type="chain" id="PRO_0000154239" description="Indole-3-glycerol phosphate synthase">
    <location>
        <begin position="1"/>
        <end position="277"/>
    </location>
</feature>